<sequence>MDIRAAEISAILKDQIKNFGKEAEVSEVGQVLSVGDGIARVYGLDNVQAGEMVEFPGGIRGMALNLESDNVGVVIFGSDRDIKEGDTVKRTGAIVDVPVGPELLGRVVDALGNPIDGKGPINATRRSRVDVKAPGIIPRKSVHEPMSTGLKAIDALIPVGRGQRELVIGDRQTGKTAILLDAFLNQKAIHESGPEGEKLYCVYVAVGQKRSTVAQFVKVLEERGALKYSIIVAATASDPAPMQFLAPFAGCAMGEYFRDNGMHALIGYDDLSKQAVSYRQMSLLLRRPPGREAYPGDVFYLHSRLLERAAKMNDDKGAGSLTALPVIETQGNDVSAFIPTNVISITDGQIFLETDLFYQGIRPAVNVGLSVSRVGSSAQIKAMKQVAGSIKGELAQYREMAAFAQFGSDLDAATQRLLNRGARLTELLKQPQFSPLKTEEQVAVIFAGVNGYLDKLPVASVGKFEQGLLSYLRSEGSAILDAIRTEKAISDGTKGKLTAALDSFAKSFQ</sequence>
<dbReference type="EC" id="7.1.2.2" evidence="1"/>
<dbReference type="EMBL" id="CP001074">
    <property type="protein sequence ID" value="ACE93082.1"/>
    <property type="molecule type" value="Genomic_DNA"/>
</dbReference>
<dbReference type="SMR" id="B3PQ70"/>
<dbReference type="KEGG" id="rec:RHECIAT_CH0004153"/>
<dbReference type="eggNOG" id="COG0056">
    <property type="taxonomic scope" value="Bacteria"/>
</dbReference>
<dbReference type="HOGENOM" id="CLU_010091_2_1_5"/>
<dbReference type="Proteomes" id="UP000008817">
    <property type="component" value="Chromosome"/>
</dbReference>
<dbReference type="GO" id="GO:0005886">
    <property type="term" value="C:plasma membrane"/>
    <property type="evidence" value="ECO:0007669"/>
    <property type="project" value="UniProtKB-SubCell"/>
</dbReference>
<dbReference type="GO" id="GO:0045259">
    <property type="term" value="C:proton-transporting ATP synthase complex"/>
    <property type="evidence" value="ECO:0007669"/>
    <property type="project" value="UniProtKB-KW"/>
</dbReference>
<dbReference type="GO" id="GO:0043531">
    <property type="term" value="F:ADP binding"/>
    <property type="evidence" value="ECO:0007669"/>
    <property type="project" value="TreeGrafter"/>
</dbReference>
<dbReference type="GO" id="GO:0005524">
    <property type="term" value="F:ATP binding"/>
    <property type="evidence" value="ECO:0007669"/>
    <property type="project" value="UniProtKB-UniRule"/>
</dbReference>
<dbReference type="GO" id="GO:0046933">
    <property type="term" value="F:proton-transporting ATP synthase activity, rotational mechanism"/>
    <property type="evidence" value="ECO:0007669"/>
    <property type="project" value="UniProtKB-UniRule"/>
</dbReference>
<dbReference type="CDD" id="cd18113">
    <property type="entry name" value="ATP-synt_F1_alpha_C"/>
    <property type="match status" value="1"/>
</dbReference>
<dbReference type="CDD" id="cd18116">
    <property type="entry name" value="ATP-synt_F1_alpha_N"/>
    <property type="match status" value="1"/>
</dbReference>
<dbReference type="CDD" id="cd01132">
    <property type="entry name" value="F1-ATPase_alpha_CD"/>
    <property type="match status" value="1"/>
</dbReference>
<dbReference type="FunFam" id="1.20.150.20:FF:000001">
    <property type="entry name" value="ATP synthase subunit alpha"/>
    <property type="match status" value="1"/>
</dbReference>
<dbReference type="FunFam" id="2.40.30.20:FF:000001">
    <property type="entry name" value="ATP synthase subunit alpha"/>
    <property type="match status" value="1"/>
</dbReference>
<dbReference type="FunFam" id="3.40.50.300:FF:002432">
    <property type="entry name" value="ATP synthase subunit alpha, mitochondrial"/>
    <property type="match status" value="1"/>
</dbReference>
<dbReference type="Gene3D" id="2.40.30.20">
    <property type="match status" value="1"/>
</dbReference>
<dbReference type="Gene3D" id="1.20.150.20">
    <property type="entry name" value="ATP synthase alpha/beta chain, C-terminal domain"/>
    <property type="match status" value="1"/>
</dbReference>
<dbReference type="Gene3D" id="3.40.50.300">
    <property type="entry name" value="P-loop containing nucleotide triphosphate hydrolases"/>
    <property type="match status" value="1"/>
</dbReference>
<dbReference type="HAMAP" id="MF_01346">
    <property type="entry name" value="ATP_synth_alpha_bact"/>
    <property type="match status" value="1"/>
</dbReference>
<dbReference type="InterPro" id="IPR023366">
    <property type="entry name" value="ATP_synth_asu-like_sf"/>
</dbReference>
<dbReference type="InterPro" id="IPR000793">
    <property type="entry name" value="ATP_synth_asu_C"/>
</dbReference>
<dbReference type="InterPro" id="IPR038376">
    <property type="entry name" value="ATP_synth_asu_C_sf"/>
</dbReference>
<dbReference type="InterPro" id="IPR033732">
    <property type="entry name" value="ATP_synth_F1_a_nt-bd_dom"/>
</dbReference>
<dbReference type="InterPro" id="IPR005294">
    <property type="entry name" value="ATP_synth_F1_asu"/>
</dbReference>
<dbReference type="InterPro" id="IPR020003">
    <property type="entry name" value="ATPase_a/bsu_AS"/>
</dbReference>
<dbReference type="InterPro" id="IPR004100">
    <property type="entry name" value="ATPase_F1/V1/A1_a/bsu_N"/>
</dbReference>
<dbReference type="InterPro" id="IPR036121">
    <property type="entry name" value="ATPase_F1/V1/A1_a/bsu_N_sf"/>
</dbReference>
<dbReference type="InterPro" id="IPR000194">
    <property type="entry name" value="ATPase_F1/V1/A1_a/bsu_nucl-bd"/>
</dbReference>
<dbReference type="InterPro" id="IPR027417">
    <property type="entry name" value="P-loop_NTPase"/>
</dbReference>
<dbReference type="NCBIfam" id="TIGR00962">
    <property type="entry name" value="atpA"/>
    <property type="match status" value="1"/>
</dbReference>
<dbReference type="NCBIfam" id="NF009884">
    <property type="entry name" value="PRK13343.1"/>
    <property type="match status" value="1"/>
</dbReference>
<dbReference type="PANTHER" id="PTHR48082">
    <property type="entry name" value="ATP SYNTHASE SUBUNIT ALPHA, MITOCHONDRIAL"/>
    <property type="match status" value="1"/>
</dbReference>
<dbReference type="PANTHER" id="PTHR48082:SF2">
    <property type="entry name" value="ATP SYNTHASE SUBUNIT ALPHA, MITOCHONDRIAL"/>
    <property type="match status" value="1"/>
</dbReference>
<dbReference type="Pfam" id="PF00006">
    <property type="entry name" value="ATP-synt_ab"/>
    <property type="match status" value="1"/>
</dbReference>
<dbReference type="Pfam" id="PF00306">
    <property type="entry name" value="ATP-synt_ab_C"/>
    <property type="match status" value="1"/>
</dbReference>
<dbReference type="Pfam" id="PF02874">
    <property type="entry name" value="ATP-synt_ab_N"/>
    <property type="match status" value="1"/>
</dbReference>
<dbReference type="PIRSF" id="PIRSF039088">
    <property type="entry name" value="F_ATPase_subunit_alpha"/>
    <property type="match status" value="1"/>
</dbReference>
<dbReference type="SUPFAM" id="SSF47917">
    <property type="entry name" value="C-terminal domain of alpha and beta subunits of F1 ATP synthase"/>
    <property type="match status" value="1"/>
</dbReference>
<dbReference type="SUPFAM" id="SSF50615">
    <property type="entry name" value="N-terminal domain of alpha and beta subunits of F1 ATP synthase"/>
    <property type="match status" value="1"/>
</dbReference>
<dbReference type="SUPFAM" id="SSF52540">
    <property type="entry name" value="P-loop containing nucleoside triphosphate hydrolases"/>
    <property type="match status" value="1"/>
</dbReference>
<dbReference type="PROSITE" id="PS00152">
    <property type="entry name" value="ATPASE_ALPHA_BETA"/>
    <property type="match status" value="1"/>
</dbReference>
<accession>B3PQ70</accession>
<comment type="function">
    <text evidence="1">Produces ATP from ADP in the presence of a proton gradient across the membrane. The alpha chain is a regulatory subunit.</text>
</comment>
<comment type="catalytic activity">
    <reaction evidence="1">
        <text>ATP + H2O + 4 H(+)(in) = ADP + phosphate + 5 H(+)(out)</text>
        <dbReference type="Rhea" id="RHEA:57720"/>
        <dbReference type="ChEBI" id="CHEBI:15377"/>
        <dbReference type="ChEBI" id="CHEBI:15378"/>
        <dbReference type="ChEBI" id="CHEBI:30616"/>
        <dbReference type="ChEBI" id="CHEBI:43474"/>
        <dbReference type="ChEBI" id="CHEBI:456216"/>
        <dbReference type="EC" id="7.1.2.2"/>
    </reaction>
</comment>
<comment type="subunit">
    <text evidence="1">F-type ATPases have 2 components, CF(1) - the catalytic core - and CF(0) - the membrane proton channel. CF(1) has five subunits: alpha(3), beta(3), gamma(1), delta(1), epsilon(1). CF(0) has three main subunits: a(1), b(2) and c(9-12). The alpha and beta chains form an alternating ring which encloses part of the gamma chain. CF(1) is attached to CF(0) by a central stalk formed by the gamma and epsilon chains, while a peripheral stalk is formed by the delta and b chains.</text>
</comment>
<comment type="subcellular location">
    <subcellularLocation>
        <location evidence="1">Cell inner membrane</location>
        <topology evidence="1">Peripheral membrane protein</topology>
    </subcellularLocation>
</comment>
<comment type="similarity">
    <text evidence="1">Belongs to the ATPase alpha/beta chains family.</text>
</comment>
<name>ATPA_RHIE6</name>
<keyword id="KW-0066">ATP synthesis</keyword>
<keyword id="KW-0067">ATP-binding</keyword>
<keyword id="KW-0997">Cell inner membrane</keyword>
<keyword id="KW-1003">Cell membrane</keyword>
<keyword id="KW-0139">CF(1)</keyword>
<keyword id="KW-0375">Hydrogen ion transport</keyword>
<keyword id="KW-0406">Ion transport</keyword>
<keyword id="KW-0472">Membrane</keyword>
<keyword id="KW-0547">Nucleotide-binding</keyword>
<keyword id="KW-1278">Translocase</keyword>
<keyword id="KW-0813">Transport</keyword>
<proteinExistence type="inferred from homology"/>
<organism>
    <name type="scientific">Rhizobium etli (strain CIAT 652)</name>
    <dbReference type="NCBI Taxonomy" id="491916"/>
    <lineage>
        <taxon>Bacteria</taxon>
        <taxon>Pseudomonadati</taxon>
        <taxon>Pseudomonadota</taxon>
        <taxon>Alphaproteobacteria</taxon>
        <taxon>Hyphomicrobiales</taxon>
        <taxon>Rhizobiaceae</taxon>
        <taxon>Rhizobium/Agrobacterium group</taxon>
        <taxon>Rhizobium</taxon>
    </lineage>
</organism>
<reference key="1">
    <citation type="journal article" date="2010" name="Appl. Environ. Microbiol.">
        <title>Conserved symbiotic plasmid DNA sequences in the multireplicon pangenomic structure of Rhizobium etli.</title>
        <authorList>
            <person name="Gonzalez V."/>
            <person name="Acosta J.L."/>
            <person name="Santamaria R.I."/>
            <person name="Bustos P."/>
            <person name="Fernandez J.L."/>
            <person name="Hernandez Gonzalez I.L."/>
            <person name="Diaz R."/>
            <person name="Flores M."/>
            <person name="Palacios R."/>
            <person name="Mora J."/>
            <person name="Davila G."/>
        </authorList>
    </citation>
    <scope>NUCLEOTIDE SEQUENCE [LARGE SCALE GENOMIC DNA]</scope>
    <source>
        <strain>CIAT 652</strain>
    </source>
</reference>
<feature type="chain" id="PRO_1000143426" description="ATP synthase subunit alpha">
    <location>
        <begin position="1"/>
        <end position="509"/>
    </location>
</feature>
<feature type="binding site" evidence="1">
    <location>
        <begin position="169"/>
        <end position="176"/>
    </location>
    <ligand>
        <name>ATP</name>
        <dbReference type="ChEBI" id="CHEBI:30616"/>
    </ligand>
</feature>
<feature type="site" description="Required for activity" evidence="1">
    <location>
        <position position="370"/>
    </location>
</feature>
<protein>
    <recommendedName>
        <fullName evidence="1">ATP synthase subunit alpha</fullName>
        <ecNumber evidence="1">7.1.2.2</ecNumber>
    </recommendedName>
    <alternativeName>
        <fullName evidence="1">ATP synthase F1 sector subunit alpha</fullName>
    </alternativeName>
    <alternativeName>
        <fullName evidence="1">F-ATPase subunit alpha</fullName>
    </alternativeName>
</protein>
<gene>
    <name evidence="1" type="primary">atpA</name>
    <name type="ordered locus">RHECIAT_CH0004153</name>
</gene>
<evidence type="ECO:0000255" key="1">
    <source>
        <dbReference type="HAMAP-Rule" id="MF_01346"/>
    </source>
</evidence>